<organism>
    <name type="scientific">Sulfurihydrogenibium sp. (strain YO3AOP1)</name>
    <dbReference type="NCBI Taxonomy" id="436114"/>
    <lineage>
        <taxon>Bacteria</taxon>
        <taxon>Pseudomonadati</taxon>
        <taxon>Aquificota</taxon>
        <taxon>Aquificia</taxon>
        <taxon>Aquificales</taxon>
        <taxon>Hydrogenothermaceae</taxon>
        <taxon>Sulfurihydrogenibium</taxon>
    </lineage>
</organism>
<comment type="function">
    <text evidence="1">Part of the twin-arginine translocation (Tat) system that transports large folded proteins containing a characteristic twin-arginine motif in their signal peptide across membranes. TatA could form the protein-conducting channel of the Tat system.</text>
</comment>
<comment type="subunit">
    <text evidence="1">Forms a complex with TatC.</text>
</comment>
<comment type="subcellular location">
    <subcellularLocation>
        <location evidence="1">Cell inner membrane</location>
        <topology evidence="1">Single-pass membrane protein</topology>
    </subcellularLocation>
</comment>
<comment type="similarity">
    <text evidence="1">Belongs to the TatA/E family.</text>
</comment>
<reference key="1">
    <citation type="journal article" date="2009" name="J. Bacteriol.">
        <title>Complete and draft genome sequences of six members of the Aquificales.</title>
        <authorList>
            <person name="Reysenbach A.-L."/>
            <person name="Hamamura N."/>
            <person name="Podar M."/>
            <person name="Griffiths E."/>
            <person name="Ferreira S."/>
            <person name="Hochstein R."/>
            <person name="Heidelberg J."/>
            <person name="Johnson J."/>
            <person name="Mead D."/>
            <person name="Pohorille A."/>
            <person name="Sarmiento M."/>
            <person name="Schweighofer K."/>
            <person name="Seshadri R."/>
            <person name="Voytek M.A."/>
        </authorList>
    </citation>
    <scope>NUCLEOTIDE SEQUENCE [LARGE SCALE GENOMIC DNA]</scope>
    <source>
        <strain>YO3AOP1</strain>
    </source>
</reference>
<name>TATA_SULSY</name>
<evidence type="ECO:0000255" key="1">
    <source>
        <dbReference type="HAMAP-Rule" id="MF_00236"/>
    </source>
</evidence>
<proteinExistence type="inferred from homology"/>
<accession>B2V6F7</accession>
<feature type="chain" id="PRO_1000197911" description="Sec-independent protein translocase protein TatA">
    <location>
        <begin position="1"/>
        <end position="74"/>
    </location>
</feature>
<feature type="transmembrane region" description="Helical" evidence="1">
    <location>
        <begin position="1"/>
        <end position="21"/>
    </location>
</feature>
<gene>
    <name evidence="1" type="primary">tatA</name>
    <name type="ordered locus">SYO3AOP1_0040</name>
</gene>
<protein>
    <recommendedName>
        <fullName evidence="1">Sec-independent protein translocase protein TatA</fullName>
    </recommendedName>
</protein>
<dbReference type="EMBL" id="CP001080">
    <property type="protein sequence ID" value="ACD65689.1"/>
    <property type="molecule type" value="Genomic_DNA"/>
</dbReference>
<dbReference type="RefSeq" id="WP_012458781.1">
    <property type="nucleotide sequence ID" value="NC_010730.1"/>
</dbReference>
<dbReference type="SMR" id="B2V6F7"/>
<dbReference type="STRING" id="436114.SYO3AOP1_0040"/>
<dbReference type="KEGG" id="sul:SYO3AOP1_0040"/>
<dbReference type="eggNOG" id="COG1826">
    <property type="taxonomic scope" value="Bacteria"/>
</dbReference>
<dbReference type="HOGENOM" id="CLU_086034_5_4_0"/>
<dbReference type="GO" id="GO:0033281">
    <property type="term" value="C:TAT protein transport complex"/>
    <property type="evidence" value="ECO:0007669"/>
    <property type="project" value="UniProtKB-UniRule"/>
</dbReference>
<dbReference type="GO" id="GO:0008320">
    <property type="term" value="F:protein transmembrane transporter activity"/>
    <property type="evidence" value="ECO:0007669"/>
    <property type="project" value="UniProtKB-UniRule"/>
</dbReference>
<dbReference type="GO" id="GO:0043953">
    <property type="term" value="P:protein transport by the Tat complex"/>
    <property type="evidence" value="ECO:0007669"/>
    <property type="project" value="UniProtKB-UniRule"/>
</dbReference>
<dbReference type="Gene3D" id="1.20.5.3310">
    <property type="match status" value="1"/>
</dbReference>
<dbReference type="HAMAP" id="MF_00236">
    <property type="entry name" value="TatA_E"/>
    <property type="match status" value="1"/>
</dbReference>
<dbReference type="InterPro" id="IPR003369">
    <property type="entry name" value="TatA/B/E"/>
</dbReference>
<dbReference type="InterPro" id="IPR006312">
    <property type="entry name" value="TatA/E"/>
</dbReference>
<dbReference type="NCBIfam" id="TIGR01411">
    <property type="entry name" value="tatAE"/>
    <property type="match status" value="1"/>
</dbReference>
<dbReference type="PANTHER" id="PTHR42982">
    <property type="entry name" value="SEC-INDEPENDENT PROTEIN TRANSLOCASE PROTEIN TATA"/>
    <property type="match status" value="1"/>
</dbReference>
<dbReference type="PANTHER" id="PTHR42982:SF1">
    <property type="entry name" value="SEC-INDEPENDENT PROTEIN TRANSLOCASE PROTEIN TATA"/>
    <property type="match status" value="1"/>
</dbReference>
<dbReference type="Pfam" id="PF02416">
    <property type="entry name" value="TatA_B_E"/>
    <property type="match status" value="1"/>
</dbReference>
<sequence length="74" mass="8072">MGSIGMTELLLIFGIIVLLFGAKKLPEIGRGLGEGIRSFKSAISGEEKKEDEKVVTPKEIEAEVIKKEKVKENA</sequence>
<keyword id="KW-0997">Cell inner membrane</keyword>
<keyword id="KW-1003">Cell membrane</keyword>
<keyword id="KW-0472">Membrane</keyword>
<keyword id="KW-0653">Protein transport</keyword>
<keyword id="KW-0811">Translocation</keyword>
<keyword id="KW-0812">Transmembrane</keyword>
<keyword id="KW-1133">Transmembrane helix</keyword>
<keyword id="KW-0813">Transport</keyword>